<gene>
    <name type="ordered locus">TC_0274</name>
</gene>
<sequence length="193" mass="20918">MPSTVAPVKGPDHFLNLVFPERVFASYMSPLAQKHPKAALYIASLAGFIFGLLKLITFPVLCAAGLFVFPIKGIISSLCHRRLDACSGYMLATFLSLFSLALIIVGIVSCVAWAPEFIFPIISIGMALATTETCFQIYTHLFPALEHKPSSPLKIENTTTKLSRSSSAPDLSCPSLSTQPTSPNQSLSAYKKY</sequence>
<dbReference type="EMBL" id="AE002160">
    <property type="protein sequence ID" value="AAF39142.1"/>
    <property type="status" value="ALT_INIT"/>
    <property type="molecule type" value="Genomic_DNA"/>
</dbReference>
<dbReference type="PIR" id="B81720">
    <property type="entry name" value="B81720"/>
</dbReference>
<dbReference type="RefSeq" id="WP_010230002.1">
    <property type="nucleotide sequence ID" value="NZ_CP063055.1"/>
</dbReference>
<dbReference type="SMR" id="Q9PL34"/>
<dbReference type="GeneID" id="1246444"/>
<dbReference type="KEGG" id="cmu:TC_0274"/>
<dbReference type="HOGENOM" id="CLU_1432211_0_0_0"/>
<dbReference type="OrthoDB" id="19117at2"/>
<dbReference type="Proteomes" id="UP000000800">
    <property type="component" value="Chromosome"/>
</dbReference>
<dbReference type="GO" id="GO:0005886">
    <property type="term" value="C:plasma membrane"/>
    <property type="evidence" value="ECO:0007669"/>
    <property type="project" value="UniProtKB-SubCell"/>
</dbReference>
<dbReference type="InterPro" id="IPR035358">
    <property type="entry name" value="DUF5422"/>
</dbReference>
<dbReference type="Pfam" id="PF17459">
    <property type="entry name" value="DUF5422"/>
    <property type="match status" value="1"/>
</dbReference>
<proteinExistence type="inferred from homology"/>
<evidence type="ECO:0000255" key="1"/>
<evidence type="ECO:0000256" key="2">
    <source>
        <dbReference type="SAM" id="MobiDB-lite"/>
    </source>
</evidence>
<evidence type="ECO:0000305" key="3"/>
<feature type="chain" id="PRO_0000218382" description="Uncharacterized protein TC_0274">
    <location>
        <begin position="1"/>
        <end position="193"/>
    </location>
</feature>
<feature type="transmembrane region" description="Helical" evidence="1">
    <location>
        <begin position="40"/>
        <end position="56"/>
    </location>
</feature>
<feature type="transmembrane region" description="Helical" evidence="1">
    <location>
        <begin position="63"/>
        <end position="79"/>
    </location>
</feature>
<feature type="transmembrane region" description="Helical" evidence="1">
    <location>
        <begin position="86"/>
        <end position="110"/>
    </location>
</feature>
<feature type="transmembrane region" description="Helical" evidence="1">
    <location>
        <begin position="117"/>
        <end position="138"/>
    </location>
</feature>
<feature type="region of interest" description="Disordered" evidence="2">
    <location>
        <begin position="158"/>
        <end position="193"/>
    </location>
</feature>
<name>Y274_CHLMU</name>
<reference key="1">
    <citation type="journal article" date="2000" name="Nucleic Acids Res.">
        <title>Genome sequences of Chlamydia trachomatis MoPn and Chlamydia pneumoniae AR39.</title>
        <authorList>
            <person name="Read T.D."/>
            <person name="Brunham R.C."/>
            <person name="Shen C."/>
            <person name="Gill S.R."/>
            <person name="Heidelberg J.F."/>
            <person name="White O."/>
            <person name="Hickey E.K."/>
            <person name="Peterson J.D."/>
            <person name="Utterback T.R."/>
            <person name="Berry K.J."/>
            <person name="Bass S."/>
            <person name="Linher K.D."/>
            <person name="Weidman J.F."/>
            <person name="Khouri H.M."/>
            <person name="Craven B."/>
            <person name="Bowman C."/>
            <person name="Dodson R.J."/>
            <person name="Gwinn M.L."/>
            <person name="Nelson W.C."/>
            <person name="DeBoy R.T."/>
            <person name="Kolonay J.F."/>
            <person name="McClarty G."/>
            <person name="Salzberg S.L."/>
            <person name="Eisen J.A."/>
            <person name="Fraser C.M."/>
        </authorList>
    </citation>
    <scope>NUCLEOTIDE SEQUENCE [LARGE SCALE GENOMIC DNA]</scope>
    <source>
        <strain>MoPn / Nigg</strain>
    </source>
</reference>
<comment type="subcellular location">
    <subcellularLocation>
        <location evidence="3">Cell membrane</location>
        <topology evidence="3">Multi-pass membrane protein</topology>
    </subcellularLocation>
</comment>
<comment type="similarity">
    <text evidence="3">Belongs to the chlamydial CPn_0442/CT_006/TC_0274 family.</text>
</comment>
<comment type="sequence caution" evidence="3">
    <conflict type="erroneous initiation">
        <sequence resource="EMBL-CDS" id="AAF39142"/>
    </conflict>
</comment>
<protein>
    <recommendedName>
        <fullName>Uncharacterized protein TC_0274</fullName>
    </recommendedName>
</protein>
<keyword id="KW-1003">Cell membrane</keyword>
<keyword id="KW-0472">Membrane</keyword>
<keyword id="KW-0812">Transmembrane</keyword>
<keyword id="KW-1133">Transmembrane helix</keyword>
<accession>Q9PL34</accession>
<organism>
    <name type="scientific">Chlamydia muridarum (strain MoPn / Nigg)</name>
    <dbReference type="NCBI Taxonomy" id="243161"/>
    <lineage>
        <taxon>Bacteria</taxon>
        <taxon>Pseudomonadati</taxon>
        <taxon>Chlamydiota</taxon>
        <taxon>Chlamydiia</taxon>
        <taxon>Chlamydiales</taxon>
        <taxon>Chlamydiaceae</taxon>
        <taxon>Chlamydia/Chlamydophila group</taxon>
        <taxon>Chlamydia</taxon>
    </lineage>
</organism>